<comment type="tissue specificity">
    <text evidence="2">Expressed in fetal brain and testis.</text>
</comment>
<comment type="similarity">
    <text evidence="3">Belongs to the TAF11 family.</text>
</comment>
<sequence>METGRQTGVSAEMLAMPRGLKGSKKDGIPEDLDGNLEAPRDQEGELRSEDVMDLTEGDSEASASAPPAAKRRKTHTKGKKESKPTVDAEEAQRMTTLLSAMSEEQLSRYEVCRRSAFPRARVAGLMRAITGSSVSENAAIAMAGIAKLFVGEVVEEALDVCEMWGETPPLQPKHLREAVRRLKPKGLFPNSNCKRIMF</sequence>
<protein>
    <recommendedName>
        <fullName evidence="3">TATA-box-binding protein-associated factor 11-like protein 5</fullName>
    </recommendedName>
</protein>
<name>TFKL5_HUMAN</name>
<evidence type="ECO:0000256" key="1">
    <source>
        <dbReference type="SAM" id="MobiDB-lite"/>
    </source>
</evidence>
<evidence type="ECO:0000269" key="2">
    <source>
    </source>
</evidence>
<evidence type="ECO:0000305" key="3"/>
<evidence type="ECO:0000312" key="4">
    <source>
        <dbReference type="HGNC" id="HGNC:53848"/>
    </source>
</evidence>
<feature type="chain" id="PRO_0000456145" description="TATA-box-binding protein-associated factor 11-like protein 5">
    <location>
        <begin position="1"/>
        <end position="198"/>
    </location>
</feature>
<feature type="region of interest" description="Disordered" evidence="1">
    <location>
        <begin position="1"/>
        <end position="90"/>
    </location>
</feature>
<feature type="compositionally biased region" description="Basic and acidic residues" evidence="1">
    <location>
        <begin position="38"/>
        <end position="50"/>
    </location>
</feature>
<feature type="compositionally biased region" description="Basic residues" evidence="1">
    <location>
        <begin position="69"/>
        <end position="78"/>
    </location>
</feature>
<feature type="compositionally biased region" description="Basic and acidic residues" evidence="1">
    <location>
        <begin position="79"/>
        <end position="90"/>
    </location>
</feature>
<keyword id="KW-1185">Reference proteome</keyword>
<organism>
    <name type="scientific">Homo sapiens</name>
    <name type="common">Human</name>
    <dbReference type="NCBI Taxonomy" id="9606"/>
    <lineage>
        <taxon>Eukaryota</taxon>
        <taxon>Metazoa</taxon>
        <taxon>Chordata</taxon>
        <taxon>Craniata</taxon>
        <taxon>Vertebrata</taxon>
        <taxon>Euteleostomi</taxon>
        <taxon>Mammalia</taxon>
        <taxon>Eutheria</taxon>
        <taxon>Euarchontoglires</taxon>
        <taxon>Primates</taxon>
        <taxon>Haplorrhini</taxon>
        <taxon>Catarrhini</taxon>
        <taxon>Hominidae</taxon>
        <taxon>Homo</taxon>
    </lineage>
</organism>
<reference key="1">
    <citation type="journal article" date="2004" name="Nature">
        <title>The DNA sequence and comparative analysis of human chromosome 5.</title>
        <authorList>
            <person name="Schmutz J."/>
            <person name="Martin J."/>
            <person name="Terry A."/>
            <person name="Couronne O."/>
            <person name="Grimwood J."/>
            <person name="Lowry S."/>
            <person name="Gordon L.A."/>
            <person name="Scott D."/>
            <person name="Xie G."/>
            <person name="Huang W."/>
            <person name="Hellsten U."/>
            <person name="Tran-Gyamfi M."/>
            <person name="She X."/>
            <person name="Prabhakar S."/>
            <person name="Aerts A."/>
            <person name="Altherr M."/>
            <person name="Bajorek E."/>
            <person name="Black S."/>
            <person name="Branscomb E."/>
            <person name="Caoile C."/>
            <person name="Challacombe J.F."/>
            <person name="Chan Y.M."/>
            <person name="Denys M."/>
            <person name="Detter J.C."/>
            <person name="Escobar J."/>
            <person name="Flowers D."/>
            <person name="Fotopulos D."/>
            <person name="Glavina T."/>
            <person name="Gomez M."/>
            <person name="Gonzales E."/>
            <person name="Goodstein D."/>
            <person name="Grigoriev I."/>
            <person name="Groza M."/>
            <person name="Hammon N."/>
            <person name="Hawkins T."/>
            <person name="Haydu L."/>
            <person name="Israni S."/>
            <person name="Jett J."/>
            <person name="Kadner K."/>
            <person name="Kimball H."/>
            <person name="Kobayashi A."/>
            <person name="Lopez F."/>
            <person name="Lou Y."/>
            <person name="Martinez D."/>
            <person name="Medina C."/>
            <person name="Morgan J."/>
            <person name="Nandkeshwar R."/>
            <person name="Noonan J.P."/>
            <person name="Pitluck S."/>
            <person name="Pollard M."/>
            <person name="Predki P."/>
            <person name="Priest J."/>
            <person name="Ramirez L."/>
            <person name="Retterer J."/>
            <person name="Rodriguez A."/>
            <person name="Rogers S."/>
            <person name="Salamov A."/>
            <person name="Salazar A."/>
            <person name="Thayer N."/>
            <person name="Tice H."/>
            <person name="Tsai M."/>
            <person name="Ustaszewska A."/>
            <person name="Vo N."/>
            <person name="Wheeler J."/>
            <person name="Wu K."/>
            <person name="Yang J."/>
            <person name="Dickson M."/>
            <person name="Cheng J.-F."/>
            <person name="Eichler E.E."/>
            <person name="Olsen A."/>
            <person name="Pennacchio L.A."/>
            <person name="Rokhsar D.S."/>
            <person name="Richardson P."/>
            <person name="Lucas S.M."/>
            <person name="Myers R.M."/>
            <person name="Rubin E.M."/>
        </authorList>
    </citation>
    <scope>NUCLEOTIDE SEQUENCE [LARGE SCALE GENOMIC DNA]</scope>
</reference>
<reference key="2">
    <citation type="submission" date="2005-09" db="EMBL/GenBank/DDBJ databases">
        <authorList>
            <person name="Mural R.J."/>
            <person name="Istrail S."/>
            <person name="Sutton G."/>
            <person name="Florea L."/>
            <person name="Halpern A.L."/>
            <person name="Mobarry C.M."/>
            <person name="Lippert R."/>
            <person name="Walenz B."/>
            <person name="Shatkay H."/>
            <person name="Dew I."/>
            <person name="Miller J.R."/>
            <person name="Flanigan M.J."/>
            <person name="Edwards N.J."/>
            <person name="Bolanos R."/>
            <person name="Fasulo D."/>
            <person name="Halldorsson B.V."/>
            <person name="Hannenhalli S."/>
            <person name="Turner R."/>
            <person name="Yooseph S."/>
            <person name="Lu F."/>
            <person name="Nusskern D.R."/>
            <person name="Shue B.C."/>
            <person name="Zheng X.H."/>
            <person name="Zhong F."/>
            <person name="Delcher A.L."/>
            <person name="Huson D.H."/>
            <person name="Kravitz S.A."/>
            <person name="Mouchard L."/>
            <person name="Reinert K."/>
            <person name="Remington K.A."/>
            <person name="Clark A.G."/>
            <person name="Waterman M.S."/>
            <person name="Eichler E.E."/>
            <person name="Adams M.D."/>
            <person name="Hunkapiller M.W."/>
            <person name="Myers E.W."/>
            <person name="Venter J.C."/>
        </authorList>
    </citation>
    <scope>NUCLEOTIDE SEQUENCE [LARGE SCALE GENOMIC DNA]</scope>
</reference>
<reference key="3">
    <citation type="journal article" date="2010" name="BMC Genomics">
        <title>Expression, tandem repeat copy number variation and stability of four macrosatellite arrays in the human genome.</title>
        <authorList>
            <person name="Tremblay D.C."/>
            <person name="Alexander G. Jr."/>
            <person name="Moseley S."/>
            <person name="Chadwick B.P."/>
        </authorList>
    </citation>
    <scope>TISSUE SPECIFICITY</scope>
</reference>
<gene>
    <name evidence="4" type="primary">TAF11L5</name>
</gene>
<proteinExistence type="evidence at transcript level"/>
<accession>A0A1W2PP81</accession>
<dbReference type="EMBL" id="AC106774">
    <property type="status" value="NOT_ANNOTATED_CDS"/>
    <property type="molecule type" value="Genomic_DNA"/>
</dbReference>
<dbReference type="EMBL" id="AC233724">
    <property type="status" value="NOT_ANNOTATED_CDS"/>
    <property type="molecule type" value="Genomic_DNA"/>
</dbReference>
<dbReference type="EMBL" id="CH471168">
    <property type="protein sequence ID" value="EAW68855.1"/>
    <property type="molecule type" value="Genomic_DNA"/>
</dbReference>
<dbReference type="CCDS" id="CCDS93693.1"/>
<dbReference type="RefSeq" id="NP_001388628.1">
    <property type="nucleotide sequence ID" value="NM_001401699.1"/>
</dbReference>
<dbReference type="SMR" id="A0A1W2PP81"/>
<dbReference type="FunCoup" id="A0A1W2PP81">
    <property type="interactions" value="61"/>
</dbReference>
<dbReference type="STRING" id="9606.ENSP00000491174"/>
<dbReference type="BioMuta" id="ENSG00000283967"/>
<dbReference type="MassIVE" id="A0A1W2PP81"/>
<dbReference type="Ensembl" id="ENST00000638483.1">
    <property type="protein sequence ID" value="ENSP00000492874.1"/>
    <property type="gene ID" value="ENSG00000284234.1"/>
</dbReference>
<dbReference type="GeneID" id="646066"/>
<dbReference type="MANE-Select" id="ENST00000638483.1">
    <property type="protein sequence ID" value="ENSP00000492874.1"/>
    <property type="RefSeq nucleotide sequence ID" value="NM_001401699.1"/>
    <property type="RefSeq protein sequence ID" value="NP_001388628.1"/>
</dbReference>
<dbReference type="AGR" id="HGNC:53848"/>
<dbReference type="GeneCards" id="TAF11L5"/>
<dbReference type="HGNC" id="HGNC:53848">
    <property type="gene designation" value="TAF11L5"/>
</dbReference>
<dbReference type="HPA" id="ENSG00000283967">
    <property type="expression patterns" value="Not detected"/>
</dbReference>
<dbReference type="HPA" id="ENSG00000284042">
    <property type="expression patterns" value="Not detected"/>
</dbReference>
<dbReference type="HPA" id="ENSG00000284234">
    <property type="expression patterns" value="Not detected"/>
</dbReference>
<dbReference type="HPA" id="ENSG00000284356">
    <property type="expression patterns" value="Not detected"/>
</dbReference>
<dbReference type="HPA" id="ENSG00000284465">
    <property type="expression patterns" value="Not detected"/>
</dbReference>
<dbReference type="VEuPathDB" id="HostDB:ENSG00000283967"/>
<dbReference type="VEuPathDB" id="HostDB:ENSG00000284042"/>
<dbReference type="VEuPathDB" id="HostDB:ENSG00000284234"/>
<dbReference type="VEuPathDB" id="HostDB:ENSG00000284356"/>
<dbReference type="VEuPathDB" id="HostDB:ENSG00000284465"/>
<dbReference type="InParanoid" id="A0A1W2PP81"/>
<dbReference type="OrthoDB" id="9532091at2759"/>
<dbReference type="PAN-GO" id="A0A1W2PP81">
    <property type="GO annotations" value="3 GO annotations based on evolutionary models"/>
</dbReference>
<dbReference type="PRO" id="PR:A0A1W2PP81"/>
<dbReference type="Proteomes" id="UP000005640">
    <property type="component" value="Chromosome 5"/>
</dbReference>
<dbReference type="RNAct" id="A0A1W2PP81">
    <property type="molecule type" value="protein"/>
</dbReference>
<dbReference type="Bgee" id="ENSG00000283967">
    <property type="expression patterns" value="Expressed in male germ line stem cell (sensu Vertebrata) in testis and 3 other cell types or tissues"/>
</dbReference>
<dbReference type="GO" id="GO:0005669">
    <property type="term" value="C:transcription factor TFIID complex"/>
    <property type="evidence" value="ECO:0000318"/>
    <property type="project" value="GO_Central"/>
</dbReference>
<dbReference type="GO" id="GO:0046982">
    <property type="term" value="F:protein heterodimerization activity"/>
    <property type="evidence" value="ECO:0007669"/>
    <property type="project" value="InterPro"/>
</dbReference>
<dbReference type="GO" id="GO:0051123">
    <property type="term" value="P:RNA polymerase II preinitiation complex assembly"/>
    <property type="evidence" value="ECO:0000318"/>
    <property type="project" value="GO_Central"/>
</dbReference>
<dbReference type="CDD" id="cd08048">
    <property type="entry name" value="HFD_TAF11"/>
    <property type="match status" value="1"/>
</dbReference>
<dbReference type="FunFam" id="1.10.20.10:FF:000025">
    <property type="entry name" value="Transcription initiation factor TFIID subunit 11"/>
    <property type="match status" value="1"/>
</dbReference>
<dbReference type="Gene3D" id="1.10.20.10">
    <property type="entry name" value="Histone, subunit A"/>
    <property type="match status" value="1"/>
</dbReference>
<dbReference type="InterPro" id="IPR009072">
    <property type="entry name" value="Histone-fold"/>
</dbReference>
<dbReference type="InterPro" id="IPR045127">
    <property type="entry name" value="TAF11-like"/>
</dbReference>
<dbReference type="InterPro" id="IPR006809">
    <property type="entry name" value="TAFII28_dom"/>
</dbReference>
<dbReference type="PANTHER" id="PTHR13218:SF18">
    <property type="entry name" value="TATA-BOX-BINDING PROTEIN-ASSOCIATED FACTOR 11-LIKE PROTEIN 10-RELATED"/>
    <property type="match status" value="1"/>
</dbReference>
<dbReference type="PANTHER" id="PTHR13218">
    <property type="entry name" value="TRANSCRIPTION INITIATION FACTOR TFIID SUBUNIT 11-RELATED"/>
    <property type="match status" value="1"/>
</dbReference>
<dbReference type="Pfam" id="PF04719">
    <property type="entry name" value="TAFII28"/>
    <property type="match status" value="1"/>
</dbReference>
<dbReference type="SUPFAM" id="SSF47113">
    <property type="entry name" value="Histone-fold"/>
    <property type="match status" value="1"/>
</dbReference>